<proteinExistence type="inferred from homology"/>
<name>RS7_ACIBY</name>
<keyword id="KW-0687">Ribonucleoprotein</keyword>
<keyword id="KW-0689">Ribosomal protein</keyword>
<keyword id="KW-0694">RNA-binding</keyword>
<keyword id="KW-0699">rRNA-binding</keyword>
<keyword id="KW-0820">tRNA-binding</keyword>
<comment type="function">
    <text evidence="1">One of the primary rRNA binding proteins, it binds directly to 16S rRNA where it nucleates assembly of the head domain of the 30S subunit. Is located at the subunit interface close to the decoding center, probably blocks exit of the E-site tRNA.</text>
</comment>
<comment type="subunit">
    <text evidence="1">Part of the 30S ribosomal subunit. Contacts proteins S9 and S11.</text>
</comment>
<comment type="similarity">
    <text evidence="1">Belongs to the universal ribosomal protein uS7 family.</text>
</comment>
<feature type="chain" id="PRO_1000125880" description="Small ribosomal subunit protein uS7">
    <location>
        <begin position="1"/>
        <end position="156"/>
    </location>
</feature>
<accession>B0V8Y4</accession>
<evidence type="ECO:0000255" key="1">
    <source>
        <dbReference type="HAMAP-Rule" id="MF_00480"/>
    </source>
</evidence>
<evidence type="ECO:0000305" key="2"/>
<dbReference type="EMBL" id="CU459141">
    <property type="protein sequence ID" value="CAM87770.1"/>
    <property type="molecule type" value="Genomic_DNA"/>
</dbReference>
<dbReference type="RefSeq" id="WP_001138055.1">
    <property type="nucleotide sequence ID" value="NZ_JBDGFB010000031.1"/>
</dbReference>
<dbReference type="SMR" id="B0V8Y4"/>
<dbReference type="EnsemblBacteria" id="CAM87770">
    <property type="protein sequence ID" value="CAM87770"/>
    <property type="gene ID" value="ABAYE2948"/>
</dbReference>
<dbReference type="GeneID" id="92892796"/>
<dbReference type="KEGG" id="aby:ABAYE2948"/>
<dbReference type="HOGENOM" id="CLU_072226_1_1_6"/>
<dbReference type="GO" id="GO:0015935">
    <property type="term" value="C:small ribosomal subunit"/>
    <property type="evidence" value="ECO:0007669"/>
    <property type="project" value="InterPro"/>
</dbReference>
<dbReference type="GO" id="GO:0019843">
    <property type="term" value="F:rRNA binding"/>
    <property type="evidence" value="ECO:0007669"/>
    <property type="project" value="UniProtKB-UniRule"/>
</dbReference>
<dbReference type="GO" id="GO:0003735">
    <property type="term" value="F:structural constituent of ribosome"/>
    <property type="evidence" value="ECO:0007669"/>
    <property type="project" value="InterPro"/>
</dbReference>
<dbReference type="GO" id="GO:0000049">
    <property type="term" value="F:tRNA binding"/>
    <property type="evidence" value="ECO:0007669"/>
    <property type="project" value="UniProtKB-UniRule"/>
</dbReference>
<dbReference type="GO" id="GO:0006412">
    <property type="term" value="P:translation"/>
    <property type="evidence" value="ECO:0007669"/>
    <property type="project" value="UniProtKB-UniRule"/>
</dbReference>
<dbReference type="CDD" id="cd14869">
    <property type="entry name" value="uS7_Bacteria"/>
    <property type="match status" value="1"/>
</dbReference>
<dbReference type="FunFam" id="1.10.455.10:FF:000001">
    <property type="entry name" value="30S ribosomal protein S7"/>
    <property type="match status" value="1"/>
</dbReference>
<dbReference type="Gene3D" id="1.10.455.10">
    <property type="entry name" value="Ribosomal protein S7 domain"/>
    <property type="match status" value="1"/>
</dbReference>
<dbReference type="HAMAP" id="MF_00480_B">
    <property type="entry name" value="Ribosomal_uS7_B"/>
    <property type="match status" value="1"/>
</dbReference>
<dbReference type="InterPro" id="IPR000235">
    <property type="entry name" value="Ribosomal_uS7"/>
</dbReference>
<dbReference type="InterPro" id="IPR005717">
    <property type="entry name" value="Ribosomal_uS7_bac/org-type"/>
</dbReference>
<dbReference type="InterPro" id="IPR020606">
    <property type="entry name" value="Ribosomal_uS7_CS"/>
</dbReference>
<dbReference type="InterPro" id="IPR023798">
    <property type="entry name" value="Ribosomal_uS7_dom"/>
</dbReference>
<dbReference type="InterPro" id="IPR036823">
    <property type="entry name" value="Ribosomal_uS7_dom_sf"/>
</dbReference>
<dbReference type="NCBIfam" id="TIGR01029">
    <property type="entry name" value="rpsG_bact"/>
    <property type="match status" value="1"/>
</dbReference>
<dbReference type="PANTHER" id="PTHR11205">
    <property type="entry name" value="RIBOSOMAL PROTEIN S7"/>
    <property type="match status" value="1"/>
</dbReference>
<dbReference type="Pfam" id="PF00177">
    <property type="entry name" value="Ribosomal_S7"/>
    <property type="match status" value="1"/>
</dbReference>
<dbReference type="PIRSF" id="PIRSF002122">
    <property type="entry name" value="RPS7p_RPS7a_RPS5e_RPS7o"/>
    <property type="match status" value="1"/>
</dbReference>
<dbReference type="SUPFAM" id="SSF47973">
    <property type="entry name" value="Ribosomal protein S7"/>
    <property type="match status" value="1"/>
</dbReference>
<dbReference type="PROSITE" id="PS00052">
    <property type="entry name" value="RIBOSOMAL_S7"/>
    <property type="match status" value="1"/>
</dbReference>
<gene>
    <name evidence="1" type="primary">rpsG</name>
    <name type="ordered locus">ABAYE2948</name>
</gene>
<sequence>MPRRRVVAAREILPDPKFSSQTIAKFMNHVMQDGKKSIAESIVYGALERVQEKNKVDPVEFFETTLEKVRPMVEVKARRVGGATYQVPMEVRPSRRTALAMRWLVDAAAKRSEKTMALRLAGELLDAAEGKGAAIKKREDVHRMAEANKAFSHYRF</sequence>
<reference key="1">
    <citation type="journal article" date="2008" name="PLoS ONE">
        <title>Comparative analysis of Acinetobacters: three genomes for three lifestyles.</title>
        <authorList>
            <person name="Vallenet D."/>
            <person name="Nordmann P."/>
            <person name="Barbe V."/>
            <person name="Poirel L."/>
            <person name="Mangenot S."/>
            <person name="Bataille E."/>
            <person name="Dossat C."/>
            <person name="Gas S."/>
            <person name="Kreimeyer A."/>
            <person name="Lenoble P."/>
            <person name="Oztas S."/>
            <person name="Poulain J."/>
            <person name="Segurens B."/>
            <person name="Robert C."/>
            <person name="Abergel C."/>
            <person name="Claverie J.-M."/>
            <person name="Raoult D."/>
            <person name="Medigue C."/>
            <person name="Weissenbach J."/>
            <person name="Cruveiller S."/>
        </authorList>
    </citation>
    <scope>NUCLEOTIDE SEQUENCE [LARGE SCALE GENOMIC DNA]</scope>
    <source>
        <strain>AYE</strain>
    </source>
</reference>
<protein>
    <recommendedName>
        <fullName evidence="1">Small ribosomal subunit protein uS7</fullName>
    </recommendedName>
    <alternativeName>
        <fullName evidence="2">30S ribosomal protein S7</fullName>
    </alternativeName>
</protein>
<organism>
    <name type="scientific">Acinetobacter baumannii (strain AYE)</name>
    <dbReference type="NCBI Taxonomy" id="509173"/>
    <lineage>
        <taxon>Bacteria</taxon>
        <taxon>Pseudomonadati</taxon>
        <taxon>Pseudomonadota</taxon>
        <taxon>Gammaproteobacteria</taxon>
        <taxon>Moraxellales</taxon>
        <taxon>Moraxellaceae</taxon>
        <taxon>Acinetobacter</taxon>
        <taxon>Acinetobacter calcoaceticus/baumannii complex</taxon>
    </lineage>
</organism>